<evidence type="ECO:0000255" key="1">
    <source>
        <dbReference type="HAMAP-Rule" id="MF_01357"/>
    </source>
</evidence>
<gene>
    <name evidence="1" type="primary">nuoC</name>
    <name type="ordered locus">Nmul_A1093</name>
</gene>
<name>NUOC_NITMU</name>
<accession>Q2YA25</accession>
<protein>
    <recommendedName>
        <fullName evidence="1">NADH-quinone oxidoreductase subunit C</fullName>
        <ecNumber evidence="1">7.1.1.-</ecNumber>
    </recommendedName>
    <alternativeName>
        <fullName evidence="1">NADH dehydrogenase I subunit C</fullName>
    </alternativeName>
    <alternativeName>
        <fullName evidence="1">NDH-1 subunit C</fullName>
    </alternativeName>
</protein>
<sequence length="205" mass="23649">MSSTRLETLALCLQNVLADKLANVDQQLDQLIITVSPVNLLPVMSVLRDHPELGFEMLIDLCGVDYSIYGVEPTSEQGREGKRFAVVYHLLSIRHNRRVRVKAFPEDDEFPVVVSVIDIWPSANWFEREAFDLYGIVFTGHPDLRRILTDYGFIGNPFRKDFPLSGNVEMRYDPDQQRVVYQPVTIEPRQITPRVIREEHYGDSE</sequence>
<feature type="chain" id="PRO_0000358152" description="NADH-quinone oxidoreductase subunit C">
    <location>
        <begin position="1"/>
        <end position="205"/>
    </location>
</feature>
<dbReference type="EC" id="7.1.1.-" evidence="1"/>
<dbReference type="EMBL" id="CP000103">
    <property type="protein sequence ID" value="ABB74396.1"/>
    <property type="molecule type" value="Genomic_DNA"/>
</dbReference>
<dbReference type="RefSeq" id="WP_011380437.1">
    <property type="nucleotide sequence ID" value="NC_007614.1"/>
</dbReference>
<dbReference type="SMR" id="Q2YA25"/>
<dbReference type="STRING" id="323848.Nmul_A1093"/>
<dbReference type="KEGG" id="nmu:Nmul_A1093"/>
<dbReference type="eggNOG" id="COG0852">
    <property type="taxonomic scope" value="Bacteria"/>
</dbReference>
<dbReference type="HOGENOM" id="CLU_042628_2_1_4"/>
<dbReference type="OrthoDB" id="9803286at2"/>
<dbReference type="Proteomes" id="UP000002718">
    <property type="component" value="Chromosome"/>
</dbReference>
<dbReference type="GO" id="GO:0005886">
    <property type="term" value="C:plasma membrane"/>
    <property type="evidence" value="ECO:0007669"/>
    <property type="project" value="UniProtKB-SubCell"/>
</dbReference>
<dbReference type="GO" id="GO:0008137">
    <property type="term" value="F:NADH dehydrogenase (ubiquinone) activity"/>
    <property type="evidence" value="ECO:0007669"/>
    <property type="project" value="InterPro"/>
</dbReference>
<dbReference type="GO" id="GO:0050136">
    <property type="term" value="F:NADH:ubiquinone reductase (non-electrogenic) activity"/>
    <property type="evidence" value="ECO:0007669"/>
    <property type="project" value="UniProtKB-UniRule"/>
</dbReference>
<dbReference type="GO" id="GO:0048038">
    <property type="term" value="F:quinone binding"/>
    <property type="evidence" value="ECO:0007669"/>
    <property type="project" value="UniProtKB-KW"/>
</dbReference>
<dbReference type="Gene3D" id="3.30.460.80">
    <property type="entry name" value="NADH:ubiquinone oxidoreductase, 30kDa subunit"/>
    <property type="match status" value="1"/>
</dbReference>
<dbReference type="HAMAP" id="MF_01357">
    <property type="entry name" value="NDH1_NuoC"/>
    <property type="match status" value="1"/>
</dbReference>
<dbReference type="InterPro" id="IPR010218">
    <property type="entry name" value="NADH_DH_suC"/>
</dbReference>
<dbReference type="InterPro" id="IPR037232">
    <property type="entry name" value="NADH_quin_OxRdtase_su_C/D-like"/>
</dbReference>
<dbReference type="InterPro" id="IPR001268">
    <property type="entry name" value="NADH_UbQ_OxRdtase_30kDa_su"/>
</dbReference>
<dbReference type="InterPro" id="IPR020396">
    <property type="entry name" value="NADH_UbQ_OxRdtase_CS"/>
</dbReference>
<dbReference type="NCBIfam" id="TIGR01961">
    <property type="entry name" value="NuoC_fam"/>
    <property type="match status" value="1"/>
</dbReference>
<dbReference type="NCBIfam" id="NF004730">
    <property type="entry name" value="PRK06074.1-1"/>
    <property type="match status" value="1"/>
</dbReference>
<dbReference type="PANTHER" id="PTHR10884:SF14">
    <property type="entry name" value="NADH DEHYDROGENASE [UBIQUINONE] IRON-SULFUR PROTEIN 3, MITOCHONDRIAL"/>
    <property type="match status" value="1"/>
</dbReference>
<dbReference type="PANTHER" id="PTHR10884">
    <property type="entry name" value="NADH DEHYDROGENASE UBIQUINONE IRON-SULFUR PROTEIN 3"/>
    <property type="match status" value="1"/>
</dbReference>
<dbReference type="Pfam" id="PF00329">
    <property type="entry name" value="Complex1_30kDa"/>
    <property type="match status" value="1"/>
</dbReference>
<dbReference type="SUPFAM" id="SSF143243">
    <property type="entry name" value="Nqo5-like"/>
    <property type="match status" value="1"/>
</dbReference>
<dbReference type="PROSITE" id="PS00542">
    <property type="entry name" value="COMPLEX1_30K"/>
    <property type="match status" value="1"/>
</dbReference>
<organism>
    <name type="scientific">Nitrosospira multiformis (strain ATCC 25196 / NCIMB 11849 / C 71)</name>
    <dbReference type="NCBI Taxonomy" id="323848"/>
    <lineage>
        <taxon>Bacteria</taxon>
        <taxon>Pseudomonadati</taxon>
        <taxon>Pseudomonadota</taxon>
        <taxon>Betaproteobacteria</taxon>
        <taxon>Nitrosomonadales</taxon>
        <taxon>Nitrosomonadaceae</taxon>
        <taxon>Nitrosospira</taxon>
    </lineage>
</organism>
<reference key="1">
    <citation type="submission" date="2005-08" db="EMBL/GenBank/DDBJ databases">
        <title>Complete sequence of chromosome 1 of Nitrosospira multiformis ATCC 25196.</title>
        <authorList>
            <person name="Copeland A."/>
            <person name="Lucas S."/>
            <person name="Lapidus A."/>
            <person name="Barry K."/>
            <person name="Detter J.C."/>
            <person name="Glavina T."/>
            <person name="Hammon N."/>
            <person name="Israni S."/>
            <person name="Pitluck S."/>
            <person name="Chain P."/>
            <person name="Malfatti S."/>
            <person name="Shin M."/>
            <person name="Vergez L."/>
            <person name="Schmutz J."/>
            <person name="Larimer F."/>
            <person name="Land M."/>
            <person name="Hauser L."/>
            <person name="Kyrpides N."/>
            <person name="Lykidis A."/>
            <person name="Richardson P."/>
        </authorList>
    </citation>
    <scope>NUCLEOTIDE SEQUENCE [LARGE SCALE GENOMIC DNA]</scope>
    <source>
        <strain>ATCC 25196 / NCIMB 11849 / C 71</strain>
    </source>
</reference>
<comment type="function">
    <text evidence="1">NDH-1 shuttles electrons from NADH, via FMN and iron-sulfur (Fe-S) centers, to quinones in the respiratory chain. The immediate electron acceptor for the enzyme in this species is believed to be ubiquinone. Couples the redox reaction to proton translocation (for every two electrons transferred, four hydrogen ions are translocated across the cytoplasmic membrane), and thus conserves the redox energy in a proton gradient.</text>
</comment>
<comment type="catalytic activity">
    <reaction evidence="1">
        <text>a quinone + NADH + 5 H(+)(in) = a quinol + NAD(+) + 4 H(+)(out)</text>
        <dbReference type="Rhea" id="RHEA:57888"/>
        <dbReference type="ChEBI" id="CHEBI:15378"/>
        <dbReference type="ChEBI" id="CHEBI:24646"/>
        <dbReference type="ChEBI" id="CHEBI:57540"/>
        <dbReference type="ChEBI" id="CHEBI:57945"/>
        <dbReference type="ChEBI" id="CHEBI:132124"/>
    </reaction>
</comment>
<comment type="subunit">
    <text evidence="1">NDH-1 is composed of 14 different subunits. Subunits NuoB, C, D, E, F, and G constitute the peripheral sector of the complex.</text>
</comment>
<comment type="subcellular location">
    <subcellularLocation>
        <location evidence="1">Cell inner membrane</location>
        <topology evidence="1">Peripheral membrane protein</topology>
        <orientation evidence="1">Cytoplasmic side</orientation>
    </subcellularLocation>
</comment>
<comment type="similarity">
    <text evidence="1">Belongs to the complex I 30 kDa subunit family.</text>
</comment>
<keyword id="KW-0997">Cell inner membrane</keyword>
<keyword id="KW-1003">Cell membrane</keyword>
<keyword id="KW-0472">Membrane</keyword>
<keyword id="KW-0520">NAD</keyword>
<keyword id="KW-0874">Quinone</keyword>
<keyword id="KW-1185">Reference proteome</keyword>
<keyword id="KW-1278">Translocase</keyword>
<keyword id="KW-0813">Transport</keyword>
<keyword id="KW-0830">Ubiquinone</keyword>
<proteinExistence type="inferred from homology"/>